<reference key="1">
    <citation type="journal article" date="2002" name="Proc. Natl. Acad. Sci. U.S.A.">
        <title>Complete genome sequence of Clostridium perfringens, an anaerobic flesh-eater.</title>
        <authorList>
            <person name="Shimizu T."/>
            <person name="Ohtani K."/>
            <person name="Hirakawa H."/>
            <person name="Ohshima K."/>
            <person name="Yamashita A."/>
            <person name="Shiba T."/>
            <person name="Ogasawara N."/>
            <person name="Hattori M."/>
            <person name="Kuhara S."/>
            <person name="Hayashi H."/>
        </authorList>
    </citation>
    <scope>NUCLEOTIDE SEQUENCE [LARGE SCALE GENOMIC DNA]</scope>
    <source>
        <strain>13 / Type A</strain>
    </source>
</reference>
<keyword id="KW-0030">Aminoacyl-tRNA synthetase</keyword>
<keyword id="KW-0067">ATP-binding</keyword>
<keyword id="KW-0963">Cytoplasm</keyword>
<keyword id="KW-0436">Ligase</keyword>
<keyword id="KW-0460">Magnesium</keyword>
<keyword id="KW-0479">Metal-binding</keyword>
<keyword id="KW-0547">Nucleotide-binding</keyword>
<keyword id="KW-0648">Protein biosynthesis</keyword>
<keyword id="KW-1185">Reference proteome</keyword>
<name>SYK_CLOPE</name>
<proteinExistence type="inferred from homology"/>
<feature type="chain" id="PRO_0000152618" description="Lysine--tRNA ligase">
    <location>
        <begin position="1"/>
        <end position="501"/>
    </location>
</feature>
<feature type="binding site" evidence="1">
    <location>
        <position position="411"/>
    </location>
    <ligand>
        <name>Mg(2+)</name>
        <dbReference type="ChEBI" id="CHEBI:18420"/>
        <label>1</label>
    </ligand>
</feature>
<feature type="binding site" evidence="1">
    <location>
        <position position="418"/>
    </location>
    <ligand>
        <name>Mg(2+)</name>
        <dbReference type="ChEBI" id="CHEBI:18420"/>
        <label>1</label>
    </ligand>
</feature>
<feature type="binding site" evidence="1">
    <location>
        <position position="418"/>
    </location>
    <ligand>
        <name>Mg(2+)</name>
        <dbReference type="ChEBI" id="CHEBI:18420"/>
        <label>2</label>
    </ligand>
</feature>
<gene>
    <name evidence="1" type="primary">lysS</name>
    <name type="ordered locus">CPE2465</name>
</gene>
<sequence length="501" mass="57550">MSNEEINIHEAEEQLSEQEMLRRQKLVELQEAGKDPFDVYKVERTHSSADVKDNFEELEGKEVKVAGRLMSKRGQGKVVFADLADLPGKIQLFIKIDNVGEEALKEFKTFDLGDWVAATGEVFKTKMGEVSVKVTSFELICKSLKPLPEKWHGLKDPDLRYRQREVDIITNPEVKDTFIKRSQIVKAIREFLDNRGFLEVDTPILSPIAGGAAARPFITHHNALDIDMYLRIATELYLKRLIVAGFEKVYEMGKNFRNEGVSVRHNPEFTAIELYEAYADYNDMMEIMENMIAYVCEKVNGSTKVTYEGTEIDFTPPWRRITMVDAVKEFAGIDFNEIKSDEEAQAIAKEKNLEFPKPLDKVTKGEVLNMLFEEYGEDKLIQPTFLIDYPVEISPLTKKKRGNEMFTERFEGFVYGREVCNAYSELNDPIVQRERFEQQAREREYGDDEAYMLDEEFMSALETGMPPTGGLGIGIDRMIMFLTDSSSIRDVILFPTMKPQK</sequence>
<protein>
    <recommendedName>
        <fullName evidence="1">Lysine--tRNA ligase</fullName>
        <ecNumber evidence="1">6.1.1.6</ecNumber>
    </recommendedName>
    <alternativeName>
        <fullName evidence="1">Lysyl-tRNA synthetase</fullName>
        <shortName evidence="1">LysRS</shortName>
    </alternativeName>
</protein>
<accession>Q8XHL8</accession>
<organism>
    <name type="scientific">Clostridium perfringens (strain 13 / Type A)</name>
    <dbReference type="NCBI Taxonomy" id="195102"/>
    <lineage>
        <taxon>Bacteria</taxon>
        <taxon>Bacillati</taxon>
        <taxon>Bacillota</taxon>
        <taxon>Clostridia</taxon>
        <taxon>Eubacteriales</taxon>
        <taxon>Clostridiaceae</taxon>
        <taxon>Clostridium</taxon>
    </lineage>
</organism>
<dbReference type="EC" id="6.1.1.6" evidence="1"/>
<dbReference type="EMBL" id="BA000016">
    <property type="protein sequence ID" value="BAB82171.1"/>
    <property type="molecule type" value="Genomic_DNA"/>
</dbReference>
<dbReference type="RefSeq" id="WP_003450333.1">
    <property type="nucleotide sequence ID" value="NC_003366.1"/>
</dbReference>
<dbReference type="SMR" id="Q8XHL8"/>
<dbReference type="STRING" id="195102.gene:10491792"/>
<dbReference type="KEGG" id="cpe:CPE2465"/>
<dbReference type="HOGENOM" id="CLU_008255_6_0_9"/>
<dbReference type="Proteomes" id="UP000000818">
    <property type="component" value="Chromosome"/>
</dbReference>
<dbReference type="GO" id="GO:0005829">
    <property type="term" value="C:cytosol"/>
    <property type="evidence" value="ECO:0007669"/>
    <property type="project" value="TreeGrafter"/>
</dbReference>
<dbReference type="GO" id="GO:0005524">
    <property type="term" value="F:ATP binding"/>
    <property type="evidence" value="ECO:0007669"/>
    <property type="project" value="UniProtKB-UniRule"/>
</dbReference>
<dbReference type="GO" id="GO:0140096">
    <property type="term" value="F:catalytic activity, acting on a protein"/>
    <property type="evidence" value="ECO:0007669"/>
    <property type="project" value="UniProtKB-ARBA"/>
</dbReference>
<dbReference type="GO" id="GO:0004824">
    <property type="term" value="F:lysine-tRNA ligase activity"/>
    <property type="evidence" value="ECO:0007669"/>
    <property type="project" value="UniProtKB-UniRule"/>
</dbReference>
<dbReference type="GO" id="GO:0000287">
    <property type="term" value="F:magnesium ion binding"/>
    <property type="evidence" value="ECO:0007669"/>
    <property type="project" value="UniProtKB-UniRule"/>
</dbReference>
<dbReference type="GO" id="GO:0016740">
    <property type="term" value="F:transferase activity"/>
    <property type="evidence" value="ECO:0007669"/>
    <property type="project" value="UniProtKB-ARBA"/>
</dbReference>
<dbReference type="GO" id="GO:0000049">
    <property type="term" value="F:tRNA binding"/>
    <property type="evidence" value="ECO:0007669"/>
    <property type="project" value="TreeGrafter"/>
</dbReference>
<dbReference type="GO" id="GO:0006430">
    <property type="term" value="P:lysyl-tRNA aminoacylation"/>
    <property type="evidence" value="ECO:0007669"/>
    <property type="project" value="UniProtKB-UniRule"/>
</dbReference>
<dbReference type="CDD" id="cd00775">
    <property type="entry name" value="LysRS_core"/>
    <property type="match status" value="1"/>
</dbReference>
<dbReference type="CDD" id="cd04322">
    <property type="entry name" value="LysRS_N"/>
    <property type="match status" value="1"/>
</dbReference>
<dbReference type="FunFam" id="2.40.50.140:FF:000024">
    <property type="entry name" value="Lysine--tRNA ligase"/>
    <property type="match status" value="1"/>
</dbReference>
<dbReference type="FunFam" id="3.30.930.10:FF:000001">
    <property type="entry name" value="Lysine--tRNA ligase"/>
    <property type="match status" value="1"/>
</dbReference>
<dbReference type="Gene3D" id="3.30.930.10">
    <property type="entry name" value="Bira Bifunctional Protein, Domain 2"/>
    <property type="match status" value="1"/>
</dbReference>
<dbReference type="Gene3D" id="2.40.50.140">
    <property type="entry name" value="Nucleic acid-binding proteins"/>
    <property type="match status" value="1"/>
</dbReference>
<dbReference type="HAMAP" id="MF_00252">
    <property type="entry name" value="Lys_tRNA_synth_class2"/>
    <property type="match status" value="1"/>
</dbReference>
<dbReference type="InterPro" id="IPR004364">
    <property type="entry name" value="Aa-tRNA-synt_II"/>
</dbReference>
<dbReference type="InterPro" id="IPR006195">
    <property type="entry name" value="aa-tRNA-synth_II"/>
</dbReference>
<dbReference type="InterPro" id="IPR045864">
    <property type="entry name" value="aa-tRNA-synth_II/BPL/LPL"/>
</dbReference>
<dbReference type="InterPro" id="IPR002313">
    <property type="entry name" value="Lys-tRNA-ligase_II"/>
</dbReference>
<dbReference type="InterPro" id="IPR044136">
    <property type="entry name" value="Lys-tRNA-ligase_II_N"/>
</dbReference>
<dbReference type="InterPro" id="IPR018149">
    <property type="entry name" value="Lys-tRNA-synth_II_C"/>
</dbReference>
<dbReference type="InterPro" id="IPR012340">
    <property type="entry name" value="NA-bd_OB-fold"/>
</dbReference>
<dbReference type="InterPro" id="IPR004365">
    <property type="entry name" value="NA-bd_OB_tRNA"/>
</dbReference>
<dbReference type="NCBIfam" id="TIGR00499">
    <property type="entry name" value="lysS_bact"/>
    <property type="match status" value="1"/>
</dbReference>
<dbReference type="NCBIfam" id="NF001756">
    <property type="entry name" value="PRK00484.1"/>
    <property type="match status" value="1"/>
</dbReference>
<dbReference type="PANTHER" id="PTHR42918:SF15">
    <property type="entry name" value="LYSINE--TRNA LIGASE, CHLOROPLASTIC_MITOCHONDRIAL"/>
    <property type="match status" value="1"/>
</dbReference>
<dbReference type="PANTHER" id="PTHR42918">
    <property type="entry name" value="LYSYL-TRNA SYNTHETASE"/>
    <property type="match status" value="1"/>
</dbReference>
<dbReference type="Pfam" id="PF00152">
    <property type="entry name" value="tRNA-synt_2"/>
    <property type="match status" value="1"/>
</dbReference>
<dbReference type="Pfam" id="PF01336">
    <property type="entry name" value="tRNA_anti-codon"/>
    <property type="match status" value="1"/>
</dbReference>
<dbReference type="PRINTS" id="PR00982">
    <property type="entry name" value="TRNASYNTHLYS"/>
</dbReference>
<dbReference type="SUPFAM" id="SSF55681">
    <property type="entry name" value="Class II aaRS and biotin synthetases"/>
    <property type="match status" value="1"/>
</dbReference>
<dbReference type="SUPFAM" id="SSF50249">
    <property type="entry name" value="Nucleic acid-binding proteins"/>
    <property type="match status" value="1"/>
</dbReference>
<dbReference type="PROSITE" id="PS50862">
    <property type="entry name" value="AA_TRNA_LIGASE_II"/>
    <property type="match status" value="1"/>
</dbReference>
<evidence type="ECO:0000255" key="1">
    <source>
        <dbReference type="HAMAP-Rule" id="MF_00252"/>
    </source>
</evidence>
<comment type="catalytic activity">
    <reaction evidence="1">
        <text>tRNA(Lys) + L-lysine + ATP = L-lysyl-tRNA(Lys) + AMP + diphosphate</text>
        <dbReference type="Rhea" id="RHEA:20792"/>
        <dbReference type="Rhea" id="RHEA-COMP:9696"/>
        <dbReference type="Rhea" id="RHEA-COMP:9697"/>
        <dbReference type="ChEBI" id="CHEBI:30616"/>
        <dbReference type="ChEBI" id="CHEBI:32551"/>
        <dbReference type="ChEBI" id="CHEBI:33019"/>
        <dbReference type="ChEBI" id="CHEBI:78442"/>
        <dbReference type="ChEBI" id="CHEBI:78529"/>
        <dbReference type="ChEBI" id="CHEBI:456215"/>
        <dbReference type="EC" id="6.1.1.6"/>
    </reaction>
</comment>
<comment type="cofactor">
    <cofactor evidence="1">
        <name>Mg(2+)</name>
        <dbReference type="ChEBI" id="CHEBI:18420"/>
    </cofactor>
    <text evidence="1">Binds 3 Mg(2+) ions per subunit.</text>
</comment>
<comment type="subunit">
    <text evidence="1">Homodimer.</text>
</comment>
<comment type="subcellular location">
    <subcellularLocation>
        <location evidence="1">Cytoplasm</location>
    </subcellularLocation>
</comment>
<comment type="similarity">
    <text evidence="1">Belongs to the class-II aminoacyl-tRNA synthetase family.</text>
</comment>